<accession>Q8D2A7</accession>
<evidence type="ECO:0000255" key="1">
    <source>
        <dbReference type="HAMAP-Rule" id="MF_00009"/>
    </source>
</evidence>
<keyword id="KW-0963">Cytoplasm</keyword>
<keyword id="KW-0255">Endonuclease</keyword>
<keyword id="KW-0378">Hydrolase</keyword>
<keyword id="KW-0479">Metal-binding</keyword>
<keyword id="KW-0540">Nuclease</keyword>
<keyword id="KW-1185">Reference proteome</keyword>
<keyword id="KW-0690">Ribosome biogenesis</keyword>
<keyword id="KW-0698">rRNA processing</keyword>
<keyword id="KW-0862">Zinc</keyword>
<feature type="chain" id="PRO_0000102567" description="Endoribonuclease YbeY">
    <location>
        <begin position="1"/>
        <end position="152"/>
    </location>
</feature>
<feature type="binding site" evidence="1">
    <location>
        <position position="114"/>
    </location>
    <ligand>
        <name>Zn(2+)</name>
        <dbReference type="ChEBI" id="CHEBI:29105"/>
        <note>catalytic</note>
    </ligand>
</feature>
<feature type="binding site" evidence="1">
    <location>
        <position position="118"/>
    </location>
    <ligand>
        <name>Zn(2+)</name>
        <dbReference type="ChEBI" id="CHEBI:29105"/>
        <note>catalytic</note>
    </ligand>
</feature>
<feature type="binding site" evidence="1">
    <location>
        <position position="124"/>
    </location>
    <ligand>
        <name>Zn(2+)</name>
        <dbReference type="ChEBI" id="CHEBI:29105"/>
        <note>catalytic</note>
    </ligand>
</feature>
<protein>
    <recommendedName>
        <fullName evidence="1">Endoribonuclease YbeY</fullName>
        <ecNumber evidence="1">3.1.-.-</ecNumber>
    </recommendedName>
</protein>
<gene>
    <name evidence="1" type="primary">ybeY</name>
    <name type="ordered locus">WIGBR4470</name>
</gene>
<proteinExistence type="inferred from homology"/>
<name>YBEY_WIGBR</name>
<comment type="function">
    <text evidence="1">Single strand-specific metallo-endoribonuclease involved in late-stage 70S ribosome quality control and in maturation of the 3' terminus of the 16S rRNA.</text>
</comment>
<comment type="cofactor">
    <cofactor evidence="1">
        <name>Zn(2+)</name>
        <dbReference type="ChEBI" id="CHEBI:29105"/>
    </cofactor>
    <text evidence="1">Binds 1 zinc ion.</text>
</comment>
<comment type="subcellular location">
    <subcellularLocation>
        <location evidence="1">Cytoplasm</location>
    </subcellularLocation>
</comment>
<comment type="similarity">
    <text evidence="1">Belongs to the endoribonuclease YbeY family.</text>
</comment>
<sequence>MNDNFLNIQIECCLYKQTPSIDKFKFWIKSIFLHFKKVSEINLRLVEKKEIKNLNKKFLKKNYPTNILAFPCIMPNNDQISFLGDLVVCSEIVEKEAKNQNKSVESHWAHIIIHGTLHLLGYDHSNNSNKIEEMEILEIKFLNLFGYHNPYF</sequence>
<reference key="1">
    <citation type="journal article" date="2002" name="Nat. Genet.">
        <title>Genome sequence of the endocellular obligate symbiont of tsetse flies, Wigglesworthia glossinidia.</title>
        <authorList>
            <person name="Akman L."/>
            <person name="Yamashita A."/>
            <person name="Watanabe H."/>
            <person name="Oshima K."/>
            <person name="Shiba T."/>
            <person name="Hattori M."/>
            <person name="Aksoy S."/>
        </authorList>
    </citation>
    <scope>NUCLEOTIDE SEQUENCE [LARGE SCALE GENOMIC DNA]</scope>
</reference>
<dbReference type="EC" id="3.1.-.-" evidence="1"/>
<dbReference type="EMBL" id="BA000021">
    <property type="protein sequence ID" value="BAC24593.1"/>
    <property type="molecule type" value="Genomic_DNA"/>
</dbReference>
<dbReference type="SMR" id="Q8D2A7"/>
<dbReference type="STRING" id="36870.gene:10368950"/>
<dbReference type="KEGG" id="wbr:ybeY"/>
<dbReference type="eggNOG" id="COG0319">
    <property type="taxonomic scope" value="Bacteria"/>
</dbReference>
<dbReference type="HOGENOM" id="CLU_106710_0_1_6"/>
<dbReference type="OrthoDB" id="9807740at2"/>
<dbReference type="Proteomes" id="UP000000562">
    <property type="component" value="Chromosome"/>
</dbReference>
<dbReference type="GO" id="GO:0005737">
    <property type="term" value="C:cytoplasm"/>
    <property type="evidence" value="ECO:0007669"/>
    <property type="project" value="UniProtKB-SubCell"/>
</dbReference>
<dbReference type="GO" id="GO:0004222">
    <property type="term" value="F:metalloendopeptidase activity"/>
    <property type="evidence" value="ECO:0007669"/>
    <property type="project" value="InterPro"/>
</dbReference>
<dbReference type="GO" id="GO:0004521">
    <property type="term" value="F:RNA endonuclease activity"/>
    <property type="evidence" value="ECO:0007669"/>
    <property type="project" value="UniProtKB-UniRule"/>
</dbReference>
<dbReference type="GO" id="GO:0008270">
    <property type="term" value="F:zinc ion binding"/>
    <property type="evidence" value="ECO:0007669"/>
    <property type="project" value="UniProtKB-UniRule"/>
</dbReference>
<dbReference type="GO" id="GO:0006364">
    <property type="term" value="P:rRNA processing"/>
    <property type="evidence" value="ECO:0007669"/>
    <property type="project" value="UniProtKB-UniRule"/>
</dbReference>
<dbReference type="Gene3D" id="3.40.390.30">
    <property type="entry name" value="Metalloproteases ('zincins'), catalytic domain"/>
    <property type="match status" value="1"/>
</dbReference>
<dbReference type="HAMAP" id="MF_00009">
    <property type="entry name" value="Endoribonucl_YbeY"/>
    <property type="match status" value="1"/>
</dbReference>
<dbReference type="InterPro" id="IPR023091">
    <property type="entry name" value="MetalPrtase_cat_dom_sf_prd"/>
</dbReference>
<dbReference type="InterPro" id="IPR002036">
    <property type="entry name" value="YbeY"/>
</dbReference>
<dbReference type="InterPro" id="IPR020549">
    <property type="entry name" value="YbeY_CS"/>
</dbReference>
<dbReference type="NCBIfam" id="TIGR00043">
    <property type="entry name" value="rRNA maturation RNase YbeY"/>
    <property type="match status" value="1"/>
</dbReference>
<dbReference type="PANTHER" id="PTHR46986">
    <property type="entry name" value="ENDORIBONUCLEASE YBEY, CHLOROPLASTIC"/>
    <property type="match status" value="1"/>
</dbReference>
<dbReference type="PANTHER" id="PTHR46986:SF1">
    <property type="entry name" value="ENDORIBONUCLEASE YBEY, CHLOROPLASTIC"/>
    <property type="match status" value="1"/>
</dbReference>
<dbReference type="Pfam" id="PF02130">
    <property type="entry name" value="YbeY"/>
    <property type="match status" value="1"/>
</dbReference>
<dbReference type="SUPFAM" id="SSF55486">
    <property type="entry name" value="Metalloproteases ('zincins'), catalytic domain"/>
    <property type="match status" value="1"/>
</dbReference>
<dbReference type="PROSITE" id="PS01306">
    <property type="entry name" value="UPF0054"/>
    <property type="match status" value="1"/>
</dbReference>
<organism>
    <name type="scientific">Wigglesworthia glossinidia brevipalpis</name>
    <dbReference type="NCBI Taxonomy" id="36870"/>
    <lineage>
        <taxon>Bacteria</taxon>
        <taxon>Pseudomonadati</taxon>
        <taxon>Pseudomonadota</taxon>
        <taxon>Gammaproteobacteria</taxon>
        <taxon>Enterobacterales</taxon>
        <taxon>Erwiniaceae</taxon>
        <taxon>Wigglesworthia</taxon>
    </lineage>
</organism>